<keyword id="KW-0479">Metal-binding</keyword>
<keyword id="KW-0560">Oxidoreductase</keyword>
<keyword id="KW-0862">Zinc</keyword>
<accession>B4T3Y1</accession>
<proteinExistence type="inferred from homology"/>
<organism>
    <name type="scientific">Salmonella newport (strain SL254)</name>
    <dbReference type="NCBI Taxonomy" id="423368"/>
    <lineage>
        <taxon>Bacteria</taxon>
        <taxon>Pseudomonadati</taxon>
        <taxon>Pseudomonadota</taxon>
        <taxon>Gammaproteobacteria</taxon>
        <taxon>Enterobacterales</taxon>
        <taxon>Enterobacteriaceae</taxon>
        <taxon>Salmonella</taxon>
    </lineage>
</organism>
<feature type="chain" id="PRO_1000145382" description="Peptide methionine sulfoxide reductase MsrB">
    <location>
        <begin position="1"/>
        <end position="137"/>
    </location>
</feature>
<feature type="domain" description="MsrB" evidence="2">
    <location>
        <begin position="7"/>
        <end position="129"/>
    </location>
</feature>
<feature type="active site" description="Nucleophile" evidence="2">
    <location>
        <position position="118"/>
    </location>
</feature>
<feature type="binding site" evidence="2">
    <location>
        <position position="46"/>
    </location>
    <ligand>
        <name>Zn(2+)</name>
        <dbReference type="ChEBI" id="CHEBI:29105"/>
    </ligand>
</feature>
<feature type="binding site" evidence="2">
    <location>
        <position position="49"/>
    </location>
    <ligand>
        <name>Zn(2+)</name>
        <dbReference type="ChEBI" id="CHEBI:29105"/>
    </ligand>
</feature>
<feature type="binding site" evidence="2">
    <location>
        <position position="95"/>
    </location>
    <ligand>
        <name>Zn(2+)</name>
        <dbReference type="ChEBI" id="CHEBI:29105"/>
    </ligand>
</feature>
<feature type="binding site" evidence="2">
    <location>
        <position position="98"/>
    </location>
    <ligand>
        <name>Zn(2+)</name>
        <dbReference type="ChEBI" id="CHEBI:29105"/>
    </ligand>
</feature>
<gene>
    <name evidence="1" type="primary">msrB</name>
    <name type="ordered locus">SNSL254_A1402</name>
</gene>
<sequence>MANQPSAEELKKKLSEMQFYVTQDRGTEPPFTGRLLHNKRDGVYHCLVCDTPLFHSHTKYDSGCGWPSFYQPVSEEAIRYIDDFSHGMQRVEIRCGNCDAHLGHVFPDGPQPTGERYCVNSASLAFSDEKNGDQLKG</sequence>
<protein>
    <recommendedName>
        <fullName evidence="1">Peptide methionine sulfoxide reductase MsrB</fullName>
        <ecNumber evidence="1">1.8.4.12</ecNumber>
    </recommendedName>
    <alternativeName>
        <fullName evidence="1">Peptide-methionine (R)-S-oxide reductase</fullName>
    </alternativeName>
</protein>
<name>MSRB_SALNS</name>
<comment type="catalytic activity">
    <reaction evidence="1">
        <text>L-methionyl-[protein] + [thioredoxin]-disulfide + H2O = L-methionyl-(R)-S-oxide-[protein] + [thioredoxin]-dithiol</text>
        <dbReference type="Rhea" id="RHEA:24164"/>
        <dbReference type="Rhea" id="RHEA-COMP:10698"/>
        <dbReference type="Rhea" id="RHEA-COMP:10700"/>
        <dbReference type="Rhea" id="RHEA-COMP:12313"/>
        <dbReference type="Rhea" id="RHEA-COMP:12314"/>
        <dbReference type="ChEBI" id="CHEBI:15377"/>
        <dbReference type="ChEBI" id="CHEBI:16044"/>
        <dbReference type="ChEBI" id="CHEBI:29950"/>
        <dbReference type="ChEBI" id="CHEBI:45764"/>
        <dbReference type="ChEBI" id="CHEBI:50058"/>
        <dbReference type="EC" id="1.8.4.12"/>
    </reaction>
</comment>
<comment type="cofactor">
    <cofactor evidence="1">
        <name>Zn(2+)</name>
        <dbReference type="ChEBI" id="CHEBI:29105"/>
    </cofactor>
    <text evidence="1">Binds 1 zinc ion per subunit. The zinc ion is important for the structural integrity of the protein.</text>
</comment>
<comment type="similarity">
    <text evidence="1">Belongs to the MsrB Met sulfoxide reductase family.</text>
</comment>
<evidence type="ECO:0000255" key="1">
    <source>
        <dbReference type="HAMAP-Rule" id="MF_01400"/>
    </source>
</evidence>
<evidence type="ECO:0000255" key="2">
    <source>
        <dbReference type="PROSITE-ProRule" id="PRU01126"/>
    </source>
</evidence>
<dbReference type="EC" id="1.8.4.12" evidence="1"/>
<dbReference type="EMBL" id="CP001113">
    <property type="protein sequence ID" value="ACF64854.1"/>
    <property type="molecule type" value="Genomic_DNA"/>
</dbReference>
<dbReference type="RefSeq" id="WP_001519539.1">
    <property type="nucleotide sequence ID" value="NZ_CCMR01000003.1"/>
</dbReference>
<dbReference type="SMR" id="B4T3Y1"/>
<dbReference type="KEGG" id="see:SNSL254_A1402"/>
<dbReference type="HOGENOM" id="CLU_031040_8_5_6"/>
<dbReference type="Proteomes" id="UP000008824">
    <property type="component" value="Chromosome"/>
</dbReference>
<dbReference type="GO" id="GO:0005737">
    <property type="term" value="C:cytoplasm"/>
    <property type="evidence" value="ECO:0007669"/>
    <property type="project" value="TreeGrafter"/>
</dbReference>
<dbReference type="GO" id="GO:0033743">
    <property type="term" value="F:peptide-methionine (R)-S-oxide reductase activity"/>
    <property type="evidence" value="ECO:0007669"/>
    <property type="project" value="UniProtKB-UniRule"/>
</dbReference>
<dbReference type="GO" id="GO:0008270">
    <property type="term" value="F:zinc ion binding"/>
    <property type="evidence" value="ECO:0007669"/>
    <property type="project" value="UniProtKB-UniRule"/>
</dbReference>
<dbReference type="GO" id="GO:0030091">
    <property type="term" value="P:protein repair"/>
    <property type="evidence" value="ECO:0007669"/>
    <property type="project" value="InterPro"/>
</dbReference>
<dbReference type="GO" id="GO:0006979">
    <property type="term" value="P:response to oxidative stress"/>
    <property type="evidence" value="ECO:0007669"/>
    <property type="project" value="InterPro"/>
</dbReference>
<dbReference type="FunFam" id="2.170.150.20:FF:000001">
    <property type="entry name" value="Peptide methionine sulfoxide reductase MsrB"/>
    <property type="match status" value="1"/>
</dbReference>
<dbReference type="Gene3D" id="2.170.150.20">
    <property type="entry name" value="Peptide methionine sulfoxide reductase"/>
    <property type="match status" value="1"/>
</dbReference>
<dbReference type="HAMAP" id="MF_01400">
    <property type="entry name" value="MsrB"/>
    <property type="match status" value="1"/>
</dbReference>
<dbReference type="InterPro" id="IPR028427">
    <property type="entry name" value="Met_Sox_Rdtase_MsrB"/>
</dbReference>
<dbReference type="InterPro" id="IPR002579">
    <property type="entry name" value="Met_Sox_Rdtase_MsrB_dom"/>
</dbReference>
<dbReference type="InterPro" id="IPR011057">
    <property type="entry name" value="Mss4-like_sf"/>
</dbReference>
<dbReference type="NCBIfam" id="TIGR00357">
    <property type="entry name" value="peptide-methionine (R)-S-oxide reductase MsrB"/>
    <property type="match status" value="1"/>
</dbReference>
<dbReference type="PANTHER" id="PTHR10173">
    <property type="entry name" value="METHIONINE SULFOXIDE REDUCTASE"/>
    <property type="match status" value="1"/>
</dbReference>
<dbReference type="PANTHER" id="PTHR10173:SF52">
    <property type="entry name" value="METHIONINE-R-SULFOXIDE REDUCTASE B1"/>
    <property type="match status" value="1"/>
</dbReference>
<dbReference type="Pfam" id="PF01641">
    <property type="entry name" value="SelR"/>
    <property type="match status" value="1"/>
</dbReference>
<dbReference type="SUPFAM" id="SSF51316">
    <property type="entry name" value="Mss4-like"/>
    <property type="match status" value="1"/>
</dbReference>
<dbReference type="PROSITE" id="PS51790">
    <property type="entry name" value="MSRB"/>
    <property type="match status" value="1"/>
</dbReference>
<reference key="1">
    <citation type="journal article" date="2011" name="J. Bacteriol.">
        <title>Comparative genomics of 28 Salmonella enterica isolates: evidence for CRISPR-mediated adaptive sublineage evolution.</title>
        <authorList>
            <person name="Fricke W.F."/>
            <person name="Mammel M.K."/>
            <person name="McDermott P.F."/>
            <person name="Tartera C."/>
            <person name="White D.G."/>
            <person name="Leclerc J.E."/>
            <person name="Ravel J."/>
            <person name="Cebula T.A."/>
        </authorList>
    </citation>
    <scope>NUCLEOTIDE SEQUENCE [LARGE SCALE GENOMIC DNA]</scope>
    <source>
        <strain>SL254</strain>
    </source>
</reference>